<keyword id="KW-0007">Acetylation</keyword>
<keyword id="KW-1003">Cell membrane</keyword>
<keyword id="KW-0175">Coiled coil</keyword>
<keyword id="KW-0968">Cytoplasmic vesicle</keyword>
<keyword id="KW-0472">Membrane</keyword>
<keyword id="KW-0597">Phosphoprotein</keyword>
<keyword id="KW-1185">Reference proteome</keyword>
<keyword id="KW-0770">Synapse</keyword>
<keyword id="KW-0812">Transmembrane</keyword>
<keyword id="KW-1133">Transmembrane helix</keyword>
<name>VAMP2_MACMU</name>
<evidence type="ECO:0000250" key="1">
    <source>
        <dbReference type="UniProtKB" id="P63026"/>
    </source>
</evidence>
<evidence type="ECO:0000250" key="2">
    <source>
        <dbReference type="UniProtKB" id="P63027"/>
    </source>
</evidence>
<evidence type="ECO:0000250" key="3">
    <source>
        <dbReference type="UniProtKB" id="P63044"/>
    </source>
</evidence>
<evidence type="ECO:0000250" key="4">
    <source>
        <dbReference type="UniProtKB" id="P63045"/>
    </source>
</evidence>
<evidence type="ECO:0000255" key="5"/>
<evidence type="ECO:0000255" key="6">
    <source>
        <dbReference type="PROSITE-ProRule" id="PRU00290"/>
    </source>
</evidence>
<evidence type="ECO:0000256" key="7">
    <source>
        <dbReference type="SAM" id="MobiDB-lite"/>
    </source>
</evidence>
<evidence type="ECO:0000305" key="8"/>
<accession>Q9N0Y0</accession>
<reference key="1">
    <citation type="submission" date="2000-03" db="EMBL/GenBank/DDBJ databases">
        <authorList>
            <person name="Jensen M.J."/>
            <person name="Smith L.A."/>
        </authorList>
    </citation>
    <scope>NUCLEOTIDE SEQUENCE [MRNA]</scope>
    <source>
        <tissue>Hippocampus</tissue>
    </source>
</reference>
<gene>
    <name type="primary">VAMP2</name>
    <name type="synonym">SYB2</name>
</gene>
<feature type="initiator methionine" description="Removed" evidence="1">
    <location>
        <position position="1"/>
    </location>
</feature>
<feature type="chain" id="PRO_0000206724" description="Vesicle-associated membrane protein 2">
    <location>
        <begin position="2"/>
        <end position="116"/>
    </location>
</feature>
<feature type="topological domain" description="Cytoplasmic" evidence="5">
    <location>
        <begin position="2"/>
        <end position="94"/>
    </location>
</feature>
<feature type="transmembrane region" description="Helical; Anchor for type IV membrane protein" evidence="5">
    <location>
        <begin position="95"/>
        <end position="114"/>
    </location>
</feature>
<feature type="topological domain" description="Vesicular" evidence="5">
    <location>
        <begin position="115"/>
        <end position="116"/>
    </location>
</feature>
<feature type="domain" description="v-SNARE coiled-coil homology" evidence="6">
    <location>
        <begin position="31"/>
        <end position="91"/>
    </location>
</feature>
<feature type="region of interest" description="Disordered" evidence="7">
    <location>
        <begin position="1"/>
        <end position="33"/>
    </location>
</feature>
<feature type="region of interest" description="Required for interaction with SEPT8" evidence="4">
    <location>
        <begin position="92"/>
        <end position="116"/>
    </location>
</feature>
<feature type="modified residue" description="N-acetylserine" evidence="1">
    <location>
        <position position="2"/>
    </location>
</feature>
<comment type="function">
    <text evidence="2 3 4">Involved in the targeting and/or fusion of transport vesicles to their target membrane (By similarity). Major SNARE protein of synaptic vesicles which mediates fusion of synaptic vesicles to release neurotransmitters. Essential for fast vesicular exocytosis and activity-dependent neurotransmitter release as well as fast endocytosis that mediates rapid reuse of synaptic vesicles (By similarity). Modulates the gating characteristics of the delayed rectifier voltage-dependent potassium channel KCNB1 (By similarity).</text>
</comment>
<comment type="subunit">
    <text evidence="2 3 4">Part of the SNARE core complex containing SNAP25, VAMP2 and STX1A; this complex constitutes the basic catalytic machinery of the complex neurotransmitter release apparatus (By similarity). Recruited to the SNARE complex following binding of the SNARE complex component STX1A to STXBP1 (By similarity). This complex binds to CPLX1. Interacts with POPDC1 and STX4 (By similarity). Interacts with VAPA and VAPB. Interacts with WDFY2, PRKCZ and PRKCI. Forms a complex with WDFY2 and PRKCZ (By similarity). Interacts (via N-terminus) with KCNB1 (via N-terminus and C-terminus); stimulates the channel inactivation rate of KCNB1 (By similarity). Interacts with SEPT8; the interaction inhibits interaction of VAMP2 with SYP. Interacts with SYP; the interaction is inhibited by interaction with SEPT8 (By similarity). Interacts with PICALM. Interacts with alpha-synuclein/SNCA (By similarity). Interacts with STX3 (By similarity).</text>
</comment>
<comment type="subcellular location">
    <subcellularLocation>
        <location evidence="2">Cytoplasmic vesicle</location>
        <location evidence="2">Secretory vesicle</location>
        <location evidence="2">Synaptic vesicle membrane</location>
        <topology evidence="5">Single-pass type IV membrane protein</topology>
    </subcellularLocation>
    <subcellularLocation>
        <location evidence="4">Cell membrane</location>
    </subcellularLocation>
    <text evidence="2">Colocalizes with PRKCZ and WDFY2 in intracellular vesicles.</text>
</comment>
<comment type="PTM">
    <text evidence="2">Phosphorylated by PRKCZ in vitro and this phosphorylation is increased in the presence of WDFY2.</text>
</comment>
<comment type="similarity">
    <text evidence="8">Belongs to the synaptobrevin family.</text>
</comment>
<organism>
    <name type="scientific">Macaca mulatta</name>
    <name type="common">Rhesus macaque</name>
    <dbReference type="NCBI Taxonomy" id="9544"/>
    <lineage>
        <taxon>Eukaryota</taxon>
        <taxon>Metazoa</taxon>
        <taxon>Chordata</taxon>
        <taxon>Craniata</taxon>
        <taxon>Vertebrata</taxon>
        <taxon>Euteleostomi</taxon>
        <taxon>Mammalia</taxon>
        <taxon>Eutheria</taxon>
        <taxon>Euarchontoglires</taxon>
        <taxon>Primates</taxon>
        <taxon>Haplorrhini</taxon>
        <taxon>Catarrhini</taxon>
        <taxon>Cercopithecidae</taxon>
        <taxon>Cercopithecinae</taxon>
        <taxon>Macaca</taxon>
    </lineage>
</organism>
<sequence length="116" mass="12663">MSATAATAPPAAPAGEGGPPAPPPNLTSNRRLQQTQAQVDEVVDIMRVNVDKVLERDQKLSELDDRADALQAGASQFETSAAKLKRKYWWKNLKMMIILGVICAIILIIIIVYFST</sequence>
<protein>
    <recommendedName>
        <fullName>Vesicle-associated membrane protein 2</fullName>
        <shortName>VAMP-2</shortName>
    </recommendedName>
    <alternativeName>
        <fullName>Synaptobrevin-2</fullName>
    </alternativeName>
</protein>
<proteinExistence type="inferred from homology"/>
<dbReference type="EMBL" id="AF240769">
    <property type="protein sequence ID" value="AAF64476.1"/>
    <property type="molecule type" value="mRNA"/>
</dbReference>
<dbReference type="RefSeq" id="NP_001027992.1">
    <property type="nucleotide sequence ID" value="NM_001032820.2"/>
</dbReference>
<dbReference type="BMRB" id="Q9N0Y0"/>
<dbReference type="SMR" id="Q9N0Y0"/>
<dbReference type="FunCoup" id="Q9N0Y0">
    <property type="interactions" value="1149"/>
</dbReference>
<dbReference type="STRING" id="9544.ENSMMUP00000068115"/>
<dbReference type="PaxDb" id="9544-ENSMMUP00000028714"/>
<dbReference type="Ensembl" id="ENSMMUT00000107313.1">
    <property type="protein sequence ID" value="ENSMMUP00000072536.1"/>
    <property type="gene ID" value="ENSMMUG00000021798.4"/>
</dbReference>
<dbReference type="GeneID" id="574134"/>
<dbReference type="KEGG" id="mcc:574134"/>
<dbReference type="CTD" id="6844"/>
<dbReference type="VEuPathDB" id="HostDB:ENSMMUG00000021798"/>
<dbReference type="VGNC" id="VGNC:75942">
    <property type="gene designation" value="PER1"/>
</dbReference>
<dbReference type="eggNOG" id="KOG0860">
    <property type="taxonomic scope" value="Eukaryota"/>
</dbReference>
<dbReference type="GeneTree" id="ENSGT00940000159217"/>
<dbReference type="InParanoid" id="Q9N0Y0"/>
<dbReference type="OrthoDB" id="10042941at2759"/>
<dbReference type="TreeFam" id="TF313666"/>
<dbReference type="Proteomes" id="UP000006718">
    <property type="component" value="Chromosome 16"/>
</dbReference>
<dbReference type="Bgee" id="ENSMMUG00000021798">
    <property type="expression patterns" value="Expressed in primary visual cortex and 21 other cell types or tissues"/>
</dbReference>
<dbReference type="ExpressionAtlas" id="Q9N0Y0">
    <property type="expression patterns" value="baseline"/>
</dbReference>
<dbReference type="GO" id="GO:0005886">
    <property type="term" value="C:plasma membrane"/>
    <property type="evidence" value="ECO:0000250"/>
    <property type="project" value="UniProtKB"/>
</dbReference>
<dbReference type="GO" id="GO:0031201">
    <property type="term" value="C:SNARE complex"/>
    <property type="evidence" value="ECO:0000250"/>
    <property type="project" value="UniProtKB"/>
</dbReference>
<dbReference type="GO" id="GO:0030672">
    <property type="term" value="C:synaptic vesicle membrane"/>
    <property type="evidence" value="ECO:0007669"/>
    <property type="project" value="UniProtKB-SubCell"/>
</dbReference>
<dbReference type="GO" id="GO:0031982">
    <property type="term" value="C:vesicle"/>
    <property type="evidence" value="ECO:0000250"/>
    <property type="project" value="UniProtKB"/>
</dbReference>
<dbReference type="GO" id="GO:0005484">
    <property type="term" value="F:SNAP receptor activity"/>
    <property type="evidence" value="ECO:0000318"/>
    <property type="project" value="GO_Central"/>
</dbReference>
<dbReference type="GO" id="GO:0017075">
    <property type="term" value="F:syntaxin-1 binding"/>
    <property type="evidence" value="ECO:0000318"/>
    <property type="project" value="GO_Central"/>
</dbReference>
<dbReference type="GO" id="GO:1902259">
    <property type="term" value="P:regulation of delayed rectifier potassium channel activity"/>
    <property type="evidence" value="ECO:0000250"/>
    <property type="project" value="UniProtKB"/>
</dbReference>
<dbReference type="GO" id="GO:0035493">
    <property type="term" value="P:SNARE complex assembly"/>
    <property type="evidence" value="ECO:0000318"/>
    <property type="project" value="GO_Central"/>
</dbReference>
<dbReference type="GO" id="GO:0048488">
    <property type="term" value="P:synaptic vesicle endocytosis"/>
    <property type="evidence" value="ECO:0000250"/>
    <property type="project" value="UniProtKB"/>
</dbReference>
<dbReference type="GO" id="GO:0016079">
    <property type="term" value="P:synaptic vesicle exocytosis"/>
    <property type="evidence" value="ECO:0000250"/>
    <property type="project" value="UniProtKB"/>
</dbReference>
<dbReference type="GO" id="GO:0006906">
    <property type="term" value="P:vesicle fusion"/>
    <property type="evidence" value="ECO:0000250"/>
    <property type="project" value="UniProtKB"/>
</dbReference>
<dbReference type="CDD" id="cd15870">
    <property type="entry name" value="R-SNARE_VAMP2"/>
    <property type="match status" value="1"/>
</dbReference>
<dbReference type="FunFam" id="1.20.5.110:FF:000013">
    <property type="entry name" value="Vesicle-associated membrane protein 2"/>
    <property type="match status" value="1"/>
</dbReference>
<dbReference type="Gene3D" id="1.20.5.110">
    <property type="match status" value="1"/>
</dbReference>
<dbReference type="InterPro" id="IPR001388">
    <property type="entry name" value="Synaptobrevin-like"/>
</dbReference>
<dbReference type="InterPro" id="IPR016444">
    <property type="entry name" value="Synaptobrevin/VAMP"/>
</dbReference>
<dbReference type="InterPro" id="IPR042855">
    <property type="entry name" value="V_SNARE_CC"/>
</dbReference>
<dbReference type="PANTHER" id="PTHR45701">
    <property type="entry name" value="SYNAPTOBREVIN FAMILY MEMBER"/>
    <property type="match status" value="1"/>
</dbReference>
<dbReference type="Pfam" id="PF00957">
    <property type="entry name" value="Synaptobrevin"/>
    <property type="match status" value="1"/>
</dbReference>
<dbReference type="PIRSF" id="PIRSF005409">
    <property type="entry name" value="Synaptobrevin_euk"/>
    <property type="match status" value="1"/>
</dbReference>
<dbReference type="PRINTS" id="PR00219">
    <property type="entry name" value="SYNAPTOBREVN"/>
</dbReference>
<dbReference type="SUPFAM" id="SSF58038">
    <property type="entry name" value="SNARE fusion complex"/>
    <property type="match status" value="1"/>
</dbReference>
<dbReference type="PROSITE" id="PS00417">
    <property type="entry name" value="SYNAPTOBREVIN"/>
    <property type="match status" value="1"/>
</dbReference>
<dbReference type="PROSITE" id="PS50892">
    <property type="entry name" value="V_SNARE"/>
    <property type="match status" value="1"/>
</dbReference>